<comment type="cofactor">
    <cofactor evidence="1">
        <name>Fe(2+)</name>
        <dbReference type="ChEBI" id="CHEBI:29033"/>
    </cofactor>
    <text evidence="1">Binds 1 Fe(2+) ion per subunit.</text>
</comment>
<comment type="cofactor">
    <cofactor evidence="1">
        <name>L-ascorbate</name>
        <dbReference type="ChEBI" id="CHEBI:38290"/>
    </cofactor>
</comment>
<organism>
    <name type="scientific">Paracoccus denitrificans (strain Pd 1222)</name>
    <dbReference type="NCBI Taxonomy" id="318586"/>
    <lineage>
        <taxon>Bacteria</taxon>
        <taxon>Pseudomonadati</taxon>
        <taxon>Pseudomonadota</taxon>
        <taxon>Alphaproteobacteria</taxon>
        <taxon>Rhodobacterales</taxon>
        <taxon>Paracoccaceae</taxon>
        <taxon>Paracoccus</taxon>
    </lineage>
</organism>
<evidence type="ECO:0000255" key="1">
    <source>
        <dbReference type="HAMAP-Rule" id="MF_00657"/>
    </source>
</evidence>
<name>Y4677_PARDP</name>
<accession>A1BB44</accession>
<geneLocation type="plasmid">
    <name>pPD1222</name>
</geneLocation>
<protein>
    <recommendedName>
        <fullName evidence="1">PKHD-type hydroxylase Pden_4677</fullName>
        <ecNumber evidence="1">1.14.11.-</ecNumber>
    </recommendedName>
</protein>
<gene>
    <name type="ordered locus">Pden_4677</name>
</gene>
<keyword id="KW-0223">Dioxygenase</keyword>
<keyword id="KW-0408">Iron</keyword>
<keyword id="KW-0479">Metal-binding</keyword>
<keyword id="KW-0560">Oxidoreductase</keyword>
<keyword id="KW-0614">Plasmid</keyword>
<keyword id="KW-1185">Reference proteome</keyword>
<keyword id="KW-0847">Vitamin C</keyword>
<dbReference type="EC" id="1.14.11.-" evidence="1"/>
<dbReference type="EMBL" id="CP000491">
    <property type="protein sequence ID" value="ABL72738.1"/>
    <property type="molecule type" value="Genomic_DNA"/>
</dbReference>
<dbReference type="RefSeq" id="WP_011750897.1">
    <property type="nucleotide sequence ID" value="NC_008688.1"/>
</dbReference>
<dbReference type="SMR" id="A1BB44"/>
<dbReference type="EnsemblBacteria" id="ABL72738">
    <property type="protein sequence ID" value="ABL72738"/>
    <property type="gene ID" value="Pden_4677"/>
</dbReference>
<dbReference type="GeneID" id="93454700"/>
<dbReference type="KEGG" id="pde:Pden_4677"/>
<dbReference type="eggNOG" id="COG3128">
    <property type="taxonomic scope" value="Bacteria"/>
</dbReference>
<dbReference type="HOGENOM" id="CLU_106663_0_0_5"/>
<dbReference type="OrthoDB" id="9812472at2"/>
<dbReference type="Proteomes" id="UP000000361">
    <property type="component" value="Plasmid pPD1222"/>
</dbReference>
<dbReference type="GO" id="GO:0016706">
    <property type="term" value="F:2-oxoglutarate-dependent dioxygenase activity"/>
    <property type="evidence" value="ECO:0007669"/>
    <property type="project" value="UniProtKB-UniRule"/>
</dbReference>
<dbReference type="GO" id="GO:0005506">
    <property type="term" value="F:iron ion binding"/>
    <property type="evidence" value="ECO:0007669"/>
    <property type="project" value="UniProtKB-UniRule"/>
</dbReference>
<dbReference type="GO" id="GO:0031418">
    <property type="term" value="F:L-ascorbic acid binding"/>
    <property type="evidence" value="ECO:0007669"/>
    <property type="project" value="UniProtKB-KW"/>
</dbReference>
<dbReference type="GO" id="GO:0006974">
    <property type="term" value="P:DNA damage response"/>
    <property type="evidence" value="ECO:0007669"/>
    <property type="project" value="TreeGrafter"/>
</dbReference>
<dbReference type="GO" id="GO:0006879">
    <property type="term" value="P:intracellular iron ion homeostasis"/>
    <property type="evidence" value="ECO:0007669"/>
    <property type="project" value="TreeGrafter"/>
</dbReference>
<dbReference type="Gene3D" id="2.60.120.620">
    <property type="entry name" value="q2cbj1_9rhob like domain"/>
    <property type="match status" value="1"/>
</dbReference>
<dbReference type="Gene3D" id="4.10.860.20">
    <property type="entry name" value="Rabenosyn, Rab binding domain"/>
    <property type="match status" value="1"/>
</dbReference>
<dbReference type="HAMAP" id="MF_00657">
    <property type="entry name" value="Hydroxyl_YbiX"/>
    <property type="match status" value="1"/>
</dbReference>
<dbReference type="InterPro" id="IPR005123">
    <property type="entry name" value="Oxoglu/Fe-dep_dioxygenase_dom"/>
</dbReference>
<dbReference type="InterPro" id="IPR041097">
    <property type="entry name" value="PKHD_C"/>
</dbReference>
<dbReference type="InterPro" id="IPR023550">
    <property type="entry name" value="PKHD_hydroxylase"/>
</dbReference>
<dbReference type="InterPro" id="IPR006620">
    <property type="entry name" value="Pro_4_hyd_alph"/>
</dbReference>
<dbReference type="InterPro" id="IPR044862">
    <property type="entry name" value="Pro_4_hyd_alph_FE2OG_OXY"/>
</dbReference>
<dbReference type="NCBIfam" id="NF003974">
    <property type="entry name" value="PRK05467.1-3"/>
    <property type="match status" value="1"/>
</dbReference>
<dbReference type="NCBIfam" id="NF003975">
    <property type="entry name" value="PRK05467.1-4"/>
    <property type="match status" value="1"/>
</dbReference>
<dbReference type="PANTHER" id="PTHR41536">
    <property type="entry name" value="PKHD-TYPE HYDROXYLASE YBIX"/>
    <property type="match status" value="1"/>
</dbReference>
<dbReference type="PANTHER" id="PTHR41536:SF1">
    <property type="entry name" value="PKHD-TYPE HYDROXYLASE YBIX"/>
    <property type="match status" value="1"/>
</dbReference>
<dbReference type="Pfam" id="PF13640">
    <property type="entry name" value="2OG-FeII_Oxy_3"/>
    <property type="match status" value="1"/>
</dbReference>
<dbReference type="Pfam" id="PF18331">
    <property type="entry name" value="PKHD_C"/>
    <property type="match status" value="1"/>
</dbReference>
<dbReference type="SMART" id="SM00702">
    <property type="entry name" value="P4Hc"/>
    <property type="match status" value="1"/>
</dbReference>
<dbReference type="SUPFAM" id="SSF51197">
    <property type="entry name" value="Clavaminate synthase-like"/>
    <property type="match status" value="1"/>
</dbReference>
<dbReference type="PROSITE" id="PS51471">
    <property type="entry name" value="FE2OG_OXY"/>
    <property type="match status" value="1"/>
</dbReference>
<reference key="1">
    <citation type="submission" date="2006-12" db="EMBL/GenBank/DDBJ databases">
        <title>Complete sequence of plasmid 1 of Paracoccus denitrificans PD1222.</title>
        <authorList>
            <person name="Copeland A."/>
            <person name="Lucas S."/>
            <person name="Lapidus A."/>
            <person name="Barry K."/>
            <person name="Detter J.C."/>
            <person name="Glavina del Rio T."/>
            <person name="Hammon N."/>
            <person name="Israni S."/>
            <person name="Dalin E."/>
            <person name="Tice H."/>
            <person name="Pitluck S."/>
            <person name="Munk A.C."/>
            <person name="Brettin T."/>
            <person name="Bruce D."/>
            <person name="Han C."/>
            <person name="Tapia R."/>
            <person name="Gilna P."/>
            <person name="Schmutz J."/>
            <person name="Larimer F."/>
            <person name="Land M."/>
            <person name="Hauser L."/>
            <person name="Kyrpides N."/>
            <person name="Lykidis A."/>
            <person name="Spiro S."/>
            <person name="Richardson D.J."/>
            <person name="Moir J.W.B."/>
            <person name="Ferguson S.J."/>
            <person name="van Spanning R.J.M."/>
            <person name="Richardson P."/>
        </authorList>
    </citation>
    <scope>NUCLEOTIDE SEQUENCE [LARGE SCALE GENOMIC DNA]</scope>
    <source>
        <strain>Pd 1222</strain>
    </source>
</reference>
<feature type="chain" id="PRO_0000346496" description="PKHD-type hydroxylase Pden_4677">
    <location>
        <begin position="1"/>
        <end position="227"/>
    </location>
</feature>
<feature type="domain" description="Fe2OG dioxygenase" evidence="1">
    <location>
        <begin position="78"/>
        <end position="178"/>
    </location>
</feature>
<feature type="binding site" evidence="1">
    <location>
        <position position="96"/>
    </location>
    <ligand>
        <name>Fe cation</name>
        <dbReference type="ChEBI" id="CHEBI:24875"/>
    </ligand>
</feature>
<feature type="binding site" evidence="1">
    <location>
        <position position="98"/>
    </location>
    <ligand>
        <name>Fe cation</name>
        <dbReference type="ChEBI" id="CHEBI:24875"/>
    </ligand>
</feature>
<feature type="binding site" evidence="1">
    <location>
        <position position="159"/>
    </location>
    <ligand>
        <name>Fe cation</name>
        <dbReference type="ChEBI" id="CHEBI:24875"/>
    </ligand>
</feature>
<feature type="binding site" evidence="1">
    <location>
        <position position="169"/>
    </location>
    <ligand>
        <name>2-oxoglutarate</name>
        <dbReference type="ChEBI" id="CHEBI:16810"/>
    </ligand>
</feature>
<sequence length="227" mass="25324">MLITIPDLLTPEEVAYMRQILEGTAWVDGRSTAGDQAGKVKRNLQVPVDSPEARELGNIVLRALGRSPVYSSAALPAHILPPMFNRYDEGMTFGAHVDGSIRVVPGTGQRIRTDVSTTVFLTPPEDYDGGELVMHDTYGQHSVKLPAGHAVVYPATSLHSVTPVTRGSRWASFFWAQSMVRDDWRRHMLYDLDMSIMRIRSMLPDDDPAVTGITAHYHNMIRHWAET</sequence>
<proteinExistence type="inferred from homology"/>